<feature type="chain" id="PRO_0000374789" description="Ribosomal protein uS12 methylthiotransferase RimO">
    <location>
        <begin position="1"/>
        <end position="440"/>
    </location>
</feature>
<feature type="domain" description="MTTase N-terminal" evidence="1">
    <location>
        <begin position="1"/>
        <end position="117"/>
    </location>
</feature>
<feature type="domain" description="Radical SAM core" evidence="2">
    <location>
        <begin position="140"/>
        <end position="370"/>
    </location>
</feature>
<feature type="domain" description="TRAM" evidence="1">
    <location>
        <begin position="373"/>
        <end position="440"/>
    </location>
</feature>
<feature type="binding site" evidence="1">
    <location>
        <position position="10"/>
    </location>
    <ligand>
        <name>[4Fe-4S] cluster</name>
        <dbReference type="ChEBI" id="CHEBI:49883"/>
        <label>1</label>
    </ligand>
</feature>
<feature type="binding site" evidence="1">
    <location>
        <position position="46"/>
    </location>
    <ligand>
        <name>[4Fe-4S] cluster</name>
        <dbReference type="ChEBI" id="CHEBI:49883"/>
        <label>1</label>
    </ligand>
</feature>
<feature type="binding site" evidence="1">
    <location>
        <position position="80"/>
    </location>
    <ligand>
        <name>[4Fe-4S] cluster</name>
        <dbReference type="ChEBI" id="CHEBI:49883"/>
        <label>1</label>
    </ligand>
</feature>
<feature type="binding site" evidence="1">
    <location>
        <position position="154"/>
    </location>
    <ligand>
        <name>[4Fe-4S] cluster</name>
        <dbReference type="ChEBI" id="CHEBI:49883"/>
        <label>2</label>
        <note>4Fe-4S-S-AdoMet</note>
    </ligand>
</feature>
<feature type="binding site" evidence="1">
    <location>
        <position position="158"/>
    </location>
    <ligand>
        <name>[4Fe-4S] cluster</name>
        <dbReference type="ChEBI" id="CHEBI:49883"/>
        <label>2</label>
        <note>4Fe-4S-S-AdoMet</note>
    </ligand>
</feature>
<feature type="binding site" evidence="1">
    <location>
        <position position="161"/>
    </location>
    <ligand>
        <name>[4Fe-4S] cluster</name>
        <dbReference type="ChEBI" id="CHEBI:49883"/>
        <label>2</label>
        <note>4Fe-4S-S-AdoMet</note>
    </ligand>
</feature>
<accession>A9KLS2</accession>
<evidence type="ECO:0000255" key="1">
    <source>
        <dbReference type="HAMAP-Rule" id="MF_01865"/>
    </source>
</evidence>
<evidence type="ECO:0000255" key="2">
    <source>
        <dbReference type="PROSITE-ProRule" id="PRU01266"/>
    </source>
</evidence>
<keyword id="KW-0004">4Fe-4S</keyword>
<keyword id="KW-0963">Cytoplasm</keyword>
<keyword id="KW-0408">Iron</keyword>
<keyword id="KW-0411">Iron-sulfur</keyword>
<keyword id="KW-0479">Metal-binding</keyword>
<keyword id="KW-1185">Reference proteome</keyword>
<keyword id="KW-0949">S-adenosyl-L-methionine</keyword>
<keyword id="KW-0808">Transferase</keyword>
<organism>
    <name type="scientific">Lachnoclostridium phytofermentans (strain ATCC 700394 / DSM 18823 / ISDg)</name>
    <name type="common">Clostridium phytofermentans</name>
    <dbReference type="NCBI Taxonomy" id="357809"/>
    <lineage>
        <taxon>Bacteria</taxon>
        <taxon>Bacillati</taxon>
        <taxon>Bacillota</taxon>
        <taxon>Clostridia</taxon>
        <taxon>Lachnospirales</taxon>
        <taxon>Lachnospiraceae</taxon>
    </lineage>
</organism>
<comment type="function">
    <text evidence="1">Catalyzes the methylthiolation of an aspartic acid residue of ribosomal protein uS12.</text>
</comment>
<comment type="catalytic activity">
    <reaction evidence="1">
        <text>L-aspartate(89)-[ribosomal protein uS12]-hydrogen + (sulfur carrier)-SH + AH2 + 2 S-adenosyl-L-methionine = 3-methylsulfanyl-L-aspartate(89)-[ribosomal protein uS12]-hydrogen + (sulfur carrier)-H + 5'-deoxyadenosine + L-methionine + A + S-adenosyl-L-homocysteine + 2 H(+)</text>
        <dbReference type="Rhea" id="RHEA:37087"/>
        <dbReference type="Rhea" id="RHEA-COMP:10460"/>
        <dbReference type="Rhea" id="RHEA-COMP:10461"/>
        <dbReference type="Rhea" id="RHEA-COMP:14737"/>
        <dbReference type="Rhea" id="RHEA-COMP:14739"/>
        <dbReference type="ChEBI" id="CHEBI:13193"/>
        <dbReference type="ChEBI" id="CHEBI:15378"/>
        <dbReference type="ChEBI" id="CHEBI:17319"/>
        <dbReference type="ChEBI" id="CHEBI:17499"/>
        <dbReference type="ChEBI" id="CHEBI:29917"/>
        <dbReference type="ChEBI" id="CHEBI:29961"/>
        <dbReference type="ChEBI" id="CHEBI:57844"/>
        <dbReference type="ChEBI" id="CHEBI:57856"/>
        <dbReference type="ChEBI" id="CHEBI:59789"/>
        <dbReference type="ChEBI" id="CHEBI:64428"/>
        <dbReference type="ChEBI" id="CHEBI:73599"/>
        <dbReference type="EC" id="2.8.4.4"/>
    </reaction>
</comment>
<comment type="cofactor">
    <cofactor evidence="1">
        <name>[4Fe-4S] cluster</name>
        <dbReference type="ChEBI" id="CHEBI:49883"/>
    </cofactor>
    <text evidence="1">Binds 2 [4Fe-4S] clusters. One cluster is coordinated with 3 cysteines and an exchangeable S-adenosyl-L-methionine.</text>
</comment>
<comment type="subcellular location">
    <subcellularLocation>
        <location evidence="1">Cytoplasm</location>
    </subcellularLocation>
</comment>
<comment type="similarity">
    <text evidence="1">Belongs to the methylthiotransferase family. RimO subfamily.</text>
</comment>
<gene>
    <name evidence="1" type="primary">rimO</name>
    <name type="ordered locus">Cphy_2455</name>
</gene>
<protein>
    <recommendedName>
        <fullName evidence="1">Ribosomal protein uS12 methylthiotransferase RimO</fullName>
        <shortName evidence="1">uS12 MTTase</shortName>
        <shortName evidence="1">uS12 methylthiotransferase</shortName>
        <ecNumber evidence="1">2.8.4.4</ecNumber>
    </recommendedName>
    <alternativeName>
        <fullName evidence="1">Ribosomal protein uS12 (aspartate-C(3))-methylthiotransferase</fullName>
    </alternativeName>
    <alternativeName>
        <fullName evidence="1">Ribosome maturation factor RimO</fullName>
    </alternativeName>
</protein>
<reference key="1">
    <citation type="submission" date="2007-11" db="EMBL/GenBank/DDBJ databases">
        <title>Complete genome sequence of Clostridium phytofermentans ISDg.</title>
        <authorList>
            <person name="Leschine S.B."/>
            <person name="Warnick T.A."/>
            <person name="Blanchard J.L."/>
            <person name="Schnell D.J."/>
            <person name="Petit E.L."/>
            <person name="LaTouf W.G."/>
            <person name="Copeland A."/>
            <person name="Lucas S."/>
            <person name="Lapidus A."/>
            <person name="Barry K."/>
            <person name="Glavina del Rio T."/>
            <person name="Dalin E."/>
            <person name="Tice H."/>
            <person name="Pitluck S."/>
            <person name="Kiss H."/>
            <person name="Brettin T."/>
            <person name="Bruce D."/>
            <person name="Detter J.C."/>
            <person name="Han C."/>
            <person name="Kuske C."/>
            <person name="Schmutz J."/>
            <person name="Larimer F."/>
            <person name="Land M."/>
            <person name="Hauser L."/>
            <person name="Kyrpides N."/>
            <person name="Kim E.A."/>
            <person name="Richardson P."/>
        </authorList>
    </citation>
    <scope>NUCLEOTIDE SEQUENCE [LARGE SCALE GENOMIC DNA]</scope>
    <source>
        <strain>ATCC 700394 / DSM 18823 / ISDg</strain>
    </source>
</reference>
<dbReference type="EC" id="2.8.4.4" evidence="1"/>
<dbReference type="EMBL" id="CP000885">
    <property type="protein sequence ID" value="ABX42816.1"/>
    <property type="molecule type" value="Genomic_DNA"/>
</dbReference>
<dbReference type="RefSeq" id="WP_012200469.1">
    <property type="nucleotide sequence ID" value="NC_010001.1"/>
</dbReference>
<dbReference type="SMR" id="A9KLS2"/>
<dbReference type="STRING" id="357809.Cphy_2455"/>
<dbReference type="KEGG" id="cpy:Cphy_2455"/>
<dbReference type="eggNOG" id="COG0621">
    <property type="taxonomic scope" value="Bacteria"/>
</dbReference>
<dbReference type="HOGENOM" id="CLU_018697_0_1_9"/>
<dbReference type="OrthoDB" id="9805215at2"/>
<dbReference type="Proteomes" id="UP000000370">
    <property type="component" value="Chromosome"/>
</dbReference>
<dbReference type="GO" id="GO:0005829">
    <property type="term" value="C:cytosol"/>
    <property type="evidence" value="ECO:0007669"/>
    <property type="project" value="TreeGrafter"/>
</dbReference>
<dbReference type="GO" id="GO:0051539">
    <property type="term" value="F:4 iron, 4 sulfur cluster binding"/>
    <property type="evidence" value="ECO:0007669"/>
    <property type="project" value="UniProtKB-UniRule"/>
</dbReference>
<dbReference type="GO" id="GO:0035599">
    <property type="term" value="F:aspartic acid methylthiotransferase activity"/>
    <property type="evidence" value="ECO:0007669"/>
    <property type="project" value="TreeGrafter"/>
</dbReference>
<dbReference type="GO" id="GO:0046872">
    <property type="term" value="F:metal ion binding"/>
    <property type="evidence" value="ECO:0007669"/>
    <property type="project" value="UniProtKB-KW"/>
</dbReference>
<dbReference type="GO" id="GO:0103039">
    <property type="term" value="F:protein methylthiotransferase activity"/>
    <property type="evidence" value="ECO:0007669"/>
    <property type="project" value="UniProtKB-EC"/>
</dbReference>
<dbReference type="GO" id="GO:0006400">
    <property type="term" value="P:tRNA modification"/>
    <property type="evidence" value="ECO:0007669"/>
    <property type="project" value="InterPro"/>
</dbReference>
<dbReference type="CDD" id="cd01335">
    <property type="entry name" value="Radical_SAM"/>
    <property type="match status" value="1"/>
</dbReference>
<dbReference type="FunFam" id="3.40.50.12160:FF:000002">
    <property type="entry name" value="Ribosomal protein S12 methylthiotransferase RimO"/>
    <property type="match status" value="1"/>
</dbReference>
<dbReference type="FunFam" id="3.80.30.20:FF:000001">
    <property type="entry name" value="tRNA-2-methylthio-N(6)-dimethylallyladenosine synthase 2"/>
    <property type="match status" value="1"/>
</dbReference>
<dbReference type="Gene3D" id="3.40.50.12160">
    <property type="entry name" value="Methylthiotransferase, N-terminal domain"/>
    <property type="match status" value="1"/>
</dbReference>
<dbReference type="Gene3D" id="2.40.50.140">
    <property type="entry name" value="Nucleic acid-binding proteins"/>
    <property type="match status" value="1"/>
</dbReference>
<dbReference type="Gene3D" id="3.80.30.20">
    <property type="entry name" value="tm_1862 like domain"/>
    <property type="match status" value="1"/>
</dbReference>
<dbReference type="HAMAP" id="MF_01865">
    <property type="entry name" value="MTTase_RimO"/>
    <property type="match status" value="1"/>
</dbReference>
<dbReference type="InterPro" id="IPR006638">
    <property type="entry name" value="Elp3/MiaA/NifB-like_rSAM"/>
</dbReference>
<dbReference type="InterPro" id="IPR005839">
    <property type="entry name" value="Methylthiotransferase"/>
</dbReference>
<dbReference type="InterPro" id="IPR020612">
    <property type="entry name" value="Methylthiotransferase_CS"/>
</dbReference>
<dbReference type="InterPro" id="IPR013848">
    <property type="entry name" value="Methylthiotransferase_N"/>
</dbReference>
<dbReference type="InterPro" id="IPR038135">
    <property type="entry name" value="Methylthiotransferase_N_sf"/>
</dbReference>
<dbReference type="InterPro" id="IPR012340">
    <property type="entry name" value="NA-bd_OB-fold"/>
</dbReference>
<dbReference type="InterPro" id="IPR005840">
    <property type="entry name" value="Ribosomal_uS12_MeSTrfase_RimO"/>
</dbReference>
<dbReference type="InterPro" id="IPR007197">
    <property type="entry name" value="rSAM"/>
</dbReference>
<dbReference type="InterPro" id="IPR023404">
    <property type="entry name" value="rSAM_horseshoe"/>
</dbReference>
<dbReference type="InterPro" id="IPR002792">
    <property type="entry name" value="TRAM_dom"/>
</dbReference>
<dbReference type="NCBIfam" id="TIGR01125">
    <property type="entry name" value="30S ribosomal protein S12 methylthiotransferase RimO"/>
    <property type="match status" value="1"/>
</dbReference>
<dbReference type="NCBIfam" id="TIGR00089">
    <property type="entry name" value="MiaB/RimO family radical SAM methylthiotransferase"/>
    <property type="match status" value="1"/>
</dbReference>
<dbReference type="PANTHER" id="PTHR43837">
    <property type="entry name" value="RIBOSOMAL PROTEIN S12 METHYLTHIOTRANSFERASE RIMO"/>
    <property type="match status" value="1"/>
</dbReference>
<dbReference type="PANTHER" id="PTHR43837:SF1">
    <property type="entry name" value="RIBOSOMAL PROTEIN US12 METHYLTHIOTRANSFERASE RIMO"/>
    <property type="match status" value="1"/>
</dbReference>
<dbReference type="Pfam" id="PF04055">
    <property type="entry name" value="Radical_SAM"/>
    <property type="match status" value="1"/>
</dbReference>
<dbReference type="Pfam" id="PF18693">
    <property type="entry name" value="TRAM_2"/>
    <property type="match status" value="1"/>
</dbReference>
<dbReference type="Pfam" id="PF00919">
    <property type="entry name" value="UPF0004"/>
    <property type="match status" value="1"/>
</dbReference>
<dbReference type="SFLD" id="SFLDG01082">
    <property type="entry name" value="B12-binding_domain_containing"/>
    <property type="match status" value="1"/>
</dbReference>
<dbReference type="SFLD" id="SFLDS00029">
    <property type="entry name" value="Radical_SAM"/>
    <property type="match status" value="1"/>
</dbReference>
<dbReference type="SFLD" id="SFLDF00274">
    <property type="entry name" value="ribosomal_protein_S12_methylth"/>
    <property type="match status" value="1"/>
</dbReference>
<dbReference type="SMART" id="SM00729">
    <property type="entry name" value="Elp3"/>
    <property type="match status" value="1"/>
</dbReference>
<dbReference type="SUPFAM" id="SSF102114">
    <property type="entry name" value="Radical SAM enzymes"/>
    <property type="match status" value="1"/>
</dbReference>
<dbReference type="PROSITE" id="PS51449">
    <property type="entry name" value="MTTASE_N"/>
    <property type="match status" value="1"/>
</dbReference>
<dbReference type="PROSITE" id="PS01278">
    <property type="entry name" value="MTTASE_RADICAL"/>
    <property type="match status" value="1"/>
</dbReference>
<dbReference type="PROSITE" id="PS51918">
    <property type="entry name" value="RADICAL_SAM"/>
    <property type="match status" value="1"/>
</dbReference>
<dbReference type="PROSITE" id="PS50926">
    <property type="entry name" value="TRAM"/>
    <property type="match status" value="1"/>
</dbReference>
<sequence length="440" mass="50070">MKIFFISLGCDKNLVDSEVMLGLIRDRGFELTNDESEADIIVVNTCCFIHDAKEESINTILEMAEYKKSGSLKGLIVTGCLAQRYKEDILAEIPEVDALLGTTSYDAITEVIDKVLGGERTESFKDVDYLSEVKTNRVNTTGGYYSFLKIAEGCDKHCTYCIIPKIRGDYRSVPMERLVEEAKFLSEGGVKELILIAQETTVYGVDLYGKKMLPELLRKLCAIDGIEWIRIQYCYPEEINDELIDVLKSETKICHYLDIPIQHASDDILKRMGRRTNNEELVTLITKLRKEIPDIALRTSLITGFPGETEEDHEILKEFVRKMRFERLGVFTYSKEEDTPAAKMKDQITKKVKVARQKELMEIQQGIAFERAESMVGRKLKVMIEGKLVEDGIFIGRTYMDAPNIDGYIFVHTKDELMSGEFVEVTVTEAKEYDLIGTAE</sequence>
<proteinExistence type="inferred from homology"/>
<name>RIMO_LACP7</name>